<protein>
    <recommendedName>
        <fullName>Lysophospholipase 1</fullName>
        <ecNumber>3.1.1.5</ecNumber>
    </recommendedName>
    <alternativeName>
        <fullName>Phospholipase B 1</fullName>
    </alternativeName>
</protein>
<feature type="signal peptide" evidence="1">
    <location>
        <begin position="1"/>
        <end position="21"/>
    </location>
</feature>
<feature type="chain" id="PRO_0000024640" description="Lysophospholipase 1">
    <location>
        <begin position="22"/>
        <end position="613"/>
    </location>
</feature>
<feature type="domain" description="PLA2c" evidence="2">
    <location>
        <begin position="55"/>
        <end position="593"/>
    </location>
</feature>
<feature type="glycosylation site" description="N-linked (GlcNAc...) asparagine" evidence="1">
    <location>
        <position position="142"/>
    </location>
</feature>
<feature type="glycosylation site" description="N-linked (GlcNAc...) asparagine" evidence="1">
    <location>
        <position position="173"/>
    </location>
</feature>
<feature type="glycosylation site" description="N-linked (GlcNAc...) asparagine" evidence="1">
    <location>
        <position position="220"/>
    </location>
</feature>
<feature type="glycosylation site" description="N-linked (GlcNAc...) asparagine" evidence="1">
    <location>
        <position position="244"/>
    </location>
</feature>
<feature type="glycosylation site" description="N-linked (GlcNAc...) asparagine" evidence="1">
    <location>
        <position position="281"/>
    </location>
</feature>
<feature type="glycosylation site" description="N-linked (GlcNAc...) asparagine" evidence="1">
    <location>
        <position position="319"/>
    </location>
</feature>
<feature type="glycosylation site" description="N-linked (GlcNAc...) asparagine" evidence="1">
    <location>
        <position position="348"/>
    </location>
</feature>
<feature type="glycosylation site" description="N-linked (GlcNAc...) asparagine" evidence="1">
    <location>
        <position position="365"/>
    </location>
</feature>
<feature type="glycosylation site" description="N-linked (GlcNAc...) asparagine" evidence="1">
    <location>
        <position position="494"/>
    </location>
</feature>
<feature type="glycosylation site" description="N-linked (GlcNAc...) asparagine" evidence="1">
    <location>
        <position position="499"/>
    </location>
</feature>
<feature type="glycosylation site" description="N-linked (GlcNAc...) asparagine" evidence="1">
    <location>
        <position position="523"/>
    </location>
</feature>
<feature type="glycosylation site" description="N-linked (GlcNAc...) asparagine" evidence="1">
    <location>
        <position position="551"/>
    </location>
</feature>
<feature type="glycosylation site" description="N-linked (GlcNAc...) asparagine" evidence="1">
    <location>
        <position position="572"/>
    </location>
</feature>
<evidence type="ECO:0000255" key="1"/>
<evidence type="ECO:0000255" key="2">
    <source>
        <dbReference type="PROSITE-ProRule" id="PRU00555"/>
    </source>
</evidence>
<evidence type="ECO:0000269" key="3">
    <source>
    </source>
</evidence>
<evidence type="ECO:0000305" key="4"/>
<name>PLB1_SCHPO</name>
<proteinExistence type="evidence at transcript level"/>
<gene>
    <name type="primary">plb1</name>
    <name type="ORF">SPAC1A6.04c</name>
</gene>
<reference key="1">
    <citation type="journal article" date="2003" name="Mol. Genet. Genomics">
        <title>The phospholipase B homolog Plb1 is a mediator of osmotic stress response and of nutrient-dependent repression of sexual differentiation in the fission yeast Schizosaccharomyces pombe.</title>
        <authorList>
            <person name="Yang P."/>
            <person name="Du H."/>
            <person name="Hoffman C.S."/>
            <person name="Marcus S."/>
        </authorList>
    </citation>
    <scope>NUCLEOTIDE SEQUENCE [MRNA]</scope>
    <scope>FUNCTION</scope>
</reference>
<reference key="2">
    <citation type="journal article" date="2002" name="Nature">
        <title>The genome sequence of Schizosaccharomyces pombe.</title>
        <authorList>
            <person name="Wood V."/>
            <person name="Gwilliam R."/>
            <person name="Rajandream M.A."/>
            <person name="Lyne M.H."/>
            <person name="Lyne R."/>
            <person name="Stewart A."/>
            <person name="Sgouros J.G."/>
            <person name="Peat N."/>
            <person name="Hayles J."/>
            <person name="Baker S.G."/>
            <person name="Basham D."/>
            <person name="Bowman S."/>
            <person name="Brooks K."/>
            <person name="Brown D."/>
            <person name="Brown S."/>
            <person name="Chillingworth T."/>
            <person name="Churcher C.M."/>
            <person name="Collins M."/>
            <person name="Connor R."/>
            <person name="Cronin A."/>
            <person name="Davis P."/>
            <person name="Feltwell T."/>
            <person name="Fraser A."/>
            <person name="Gentles S."/>
            <person name="Goble A."/>
            <person name="Hamlin N."/>
            <person name="Harris D.E."/>
            <person name="Hidalgo J."/>
            <person name="Hodgson G."/>
            <person name="Holroyd S."/>
            <person name="Hornsby T."/>
            <person name="Howarth S."/>
            <person name="Huckle E.J."/>
            <person name="Hunt S."/>
            <person name="Jagels K."/>
            <person name="James K.D."/>
            <person name="Jones L."/>
            <person name="Jones M."/>
            <person name="Leather S."/>
            <person name="McDonald S."/>
            <person name="McLean J."/>
            <person name="Mooney P."/>
            <person name="Moule S."/>
            <person name="Mungall K.L."/>
            <person name="Murphy L.D."/>
            <person name="Niblett D."/>
            <person name="Odell C."/>
            <person name="Oliver K."/>
            <person name="O'Neil S."/>
            <person name="Pearson D."/>
            <person name="Quail M.A."/>
            <person name="Rabbinowitsch E."/>
            <person name="Rutherford K.M."/>
            <person name="Rutter S."/>
            <person name="Saunders D."/>
            <person name="Seeger K."/>
            <person name="Sharp S."/>
            <person name="Skelton J."/>
            <person name="Simmonds M.N."/>
            <person name="Squares R."/>
            <person name="Squares S."/>
            <person name="Stevens K."/>
            <person name="Taylor K."/>
            <person name="Taylor R.G."/>
            <person name="Tivey A."/>
            <person name="Walsh S.V."/>
            <person name="Warren T."/>
            <person name="Whitehead S."/>
            <person name="Woodward J.R."/>
            <person name="Volckaert G."/>
            <person name="Aert R."/>
            <person name="Robben J."/>
            <person name="Grymonprez B."/>
            <person name="Weltjens I."/>
            <person name="Vanstreels E."/>
            <person name="Rieger M."/>
            <person name="Schaefer M."/>
            <person name="Mueller-Auer S."/>
            <person name="Gabel C."/>
            <person name="Fuchs M."/>
            <person name="Duesterhoeft A."/>
            <person name="Fritzc C."/>
            <person name="Holzer E."/>
            <person name="Moestl D."/>
            <person name="Hilbert H."/>
            <person name="Borzym K."/>
            <person name="Langer I."/>
            <person name="Beck A."/>
            <person name="Lehrach H."/>
            <person name="Reinhardt R."/>
            <person name="Pohl T.M."/>
            <person name="Eger P."/>
            <person name="Zimmermann W."/>
            <person name="Wedler H."/>
            <person name="Wambutt R."/>
            <person name="Purnelle B."/>
            <person name="Goffeau A."/>
            <person name="Cadieu E."/>
            <person name="Dreano S."/>
            <person name="Gloux S."/>
            <person name="Lelaure V."/>
            <person name="Mottier S."/>
            <person name="Galibert F."/>
            <person name="Aves S.J."/>
            <person name="Xiang Z."/>
            <person name="Hunt C."/>
            <person name="Moore K."/>
            <person name="Hurst S.M."/>
            <person name="Lucas M."/>
            <person name="Rochet M."/>
            <person name="Gaillardin C."/>
            <person name="Tallada V.A."/>
            <person name="Garzon A."/>
            <person name="Thode G."/>
            <person name="Daga R.R."/>
            <person name="Cruzado L."/>
            <person name="Jimenez J."/>
            <person name="Sanchez M."/>
            <person name="del Rey F."/>
            <person name="Benito J."/>
            <person name="Dominguez A."/>
            <person name="Revuelta J.L."/>
            <person name="Moreno S."/>
            <person name="Armstrong J."/>
            <person name="Forsburg S.L."/>
            <person name="Cerutti L."/>
            <person name="Lowe T."/>
            <person name="McCombie W.R."/>
            <person name="Paulsen I."/>
            <person name="Potashkin J."/>
            <person name="Shpakovski G.V."/>
            <person name="Ussery D."/>
            <person name="Barrell B.G."/>
            <person name="Nurse P."/>
        </authorList>
    </citation>
    <scope>NUCLEOTIDE SEQUENCE [LARGE SCALE GENOMIC DNA]</scope>
    <source>
        <strain>972 / ATCC 24843</strain>
    </source>
</reference>
<reference key="3">
    <citation type="submission" date="1997-07" db="EMBL/GenBank/DDBJ databases">
        <title>S.pombe phospholipase B homolog.</title>
        <authorList>
            <person name="Kawamukai M."/>
        </authorList>
    </citation>
    <scope>NUCLEOTIDE SEQUENCE [MRNA] OF 294-613</scope>
</reference>
<reference key="4">
    <citation type="journal article" date="1997" name="DNA Res.">
        <title>Identification of open reading frames in Schizosaccharomyces pombe cDNAs.</title>
        <authorList>
            <person name="Yoshioka S."/>
            <person name="Kato K."/>
            <person name="Nakai K."/>
            <person name="Okayama H."/>
            <person name="Nojima H."/>
        </authorList>
    </citation>
    <scope>NUCLEOTIDE SEQUENCE [LARGE SCALE MRNA] OF 338-613</scope>
    <source>
        <strain>PR745</strain>
    </source>
</reference>
<comment type="function">
    <text evidence="3">Catalyzes the release of fatty acids from lysophospholipids. Required for survival under high osmolarity, for normal osmotic stress-induced gene expression, and for nutrient-mediated repression of sexual differentiation.</text>
</comment>
<comment type="catalytic activity">
    <reaction>
        <text>a 1-acyl-sn-glycero-3-phosphocholine + H2O = sn-glycerol 3-phosphocholine + a fatty acid + H(+)</text>
        <dbReference type="Rhea" id="RHEA:15177"/>
        <dbReference type="ChEBI" id="CHEBI:15377"/>
        <dbReference type="ChEBI" id="CHEBI:15378"/>
        <dbReference type="ChEBI" id="CHEBI:16870"/>
        <dbReference type="ChEBI" id="CHEBI:28868"/>
        <dbReference type="ChEBI" id="CHEBI:58168"/>
        <dbReference type="EC" id="3.1.1.5"/>
    </reaction>
</comment>
<comment type="subcellular location">
    <subcellularLocation>
        <location evidence="4">Secreted</location>
    </subcellularLocation>
</comment>
<comment type="similarity">
    <text evidence="4">Belongs to the lysophospholipase family.</text>
</comment>
<sequence>MLFRGLSLWMLFLASCLSALALPAAEDDGSVKVFKRAKKHSTKQEGPSYAPYYVDCPSDNIVESLSSNEIPSAESEYLSTRSTITNTAMKDFLRNANLPGLNADTLSGSEGPSIGIALSGGGLRAMILGSGALSAMDARHDNHTVLTGLLQASDYLVGTDGSAWTVGGIALNNFSTINDFSKLWAFNHPLMYPKSAIVFNAHFYSSIMNEVAEKANAGFNISLSDYWGRVISRTLGDTTYGFPNVSLSSITSQEWYRNANFPYPIITFATQNYGEDISNVNTTFFEASPNVFGTFDHGINSFIPTEYLGTTLNNGASSNGSCVINYDNFGFMMGASSTYFNKIMRNFNDSSTKNGRIIQQYLKGNFSENGQQIISIPNPFQGVESANSDAANNLGSSSSLNLVDTFLTGEKIPLWPLLQKGRDVDVIVAVDNGDDSEWLWPNGNSLVQTYERVVAAQAAGNTNVKGFPYVPSQQSFVSLHFNDRPVFFGCDGRNTTAGNHTVTRDTPPLVIYLPNVPYNYFTNISTDRTYYTEDMIQQLLTNGLISSTVDNDTYFGQCFACAVVKRTLERNNITASPECQQCYYNYCWSGLYDDSAANDDIVYNPTCRLGEGI</sequence>
<accession>P78854</accession>
<organism>
    <name type="scientific">Schizosaccharomyces pombe (strain 972 / ATCC 24843)</name>
    <name type="common">Fission yeast</name>
    <dbReference type="NCBI Taxonomy" id="284812"/>
    <lineage>
        <taxon>Eukaryota</taxon>
        <taxon>Fungi</taxon>
        <taxon>Dikarya</taxon>
        <taxon>Ascomycota</taxon>
        <taxon>Taphrinomycotina</taxon>
        <taxon>Schizosaccharomycetes</taxon>
        <taxon>Schizosaccharomycetales</taxon>
        <taxon>Schizosaccharomycetaceae</taxon>
        <taxon>Schizosaccharomyces</taxon>
    </lineage>
</organism>
<keyword id="KW-0325">Glycoprotein</keyword>
<keyword id="KW-0378">Hydrolase</keyword>
<keyword id="KW-0442">Lipid degradation</keyword>
<keyword id="KW-0443">Lipid metabolism</keyword>
<keyword id="KW-1185">Reference proteome</keyword>
<keyword id="KW-0964">Secreted</keyword>
<keyword id="KW-0732">Signal</keyword>
<dbReference type="EC" id="3.1.1.5"/>
<dbReference type="EMBL" id="AY235223">
    <property type="protein sequence ID" value="AAO46159.1"/>
    <property type="molecule type" value="mRNA"/>
</dbReference>
<dbReference type="EMBL" id="CU329670">
    <property type="protein sequence ID" value="CAB16354.1"/>
    <property type="molecule type" value="Genomic_DNA"/>
</dbReference>
<dbReference type="EMBL" id="AB005603">
    <property type="protein sequence ID" value="BAA21498.1"/>
    <property type="molecule type" value="mRNA"/>
</dbReference>
<dbReference type="EMBL" id="D89204">
    <property type="protein sequence ID" value="BAA13865.1"/>
    <property type="molecule type" value="mRNA"/>
</dbReference>
<dbReference type="PIR" id="T38007">
    <property type="entry name" value="T38007"/>
</dbReference>
<dbReference type="RefSeq" id="NP_593196.1">
    <property type="nucleotide sequence ID" value="NM_001018592.2"/>
</dbReference>
<dbReference type="SMR" id="P78854"/>
<dbReference type="BioGRID" id="278956">
    <property type="interactions" value="109"/>
</dbReference>
<dbReference type="DIP" id="DIP-59118N"/>
<dbReference type="FunCoup" id="P78854">
    <property type="interactions" value="125"/>
</dbReference>
<dbReference type="IntAct" id="P78854">
    <property type="interactions" value="1"/>
</dbReference>
<dbReference type="STRING" id="284812.P78854"/>
<dbReference type="GlyCosmos" id="P78854">
    <property type="glycosylation" value="13 sites, No reported glycans"/>
</dbReference>
<dbReference type="iPTMnet" id="P78854"/>
<dbReference type="PaxDb" id="4896-SPAC1A6.04c.1"/>
<dbReference type="EnsemblFungi" id="SPAC1A6.04c.1">
    <property type="protein sequence ID" value="SPAC1A6.04c.1:pep"/>
    <property type="gene ID" value="SPAC1A6.04c"/>
</dbReference>
<dbReference type="GeneID" id="2542497"/>
<dbReference type="KEGG" id="spo:2542497"/>
<dbReference type="PomBase" id="SPAC1A6.04c">
    <property type="gene designation" value="plb1"/>
</dbReference>
<dbReference type="VEuPathDB" id="FungiDB:SPAC1A6.04c"/>
<dbReference type="eggNOG" id="KOG1325">
    <property type="taxonomic scope" value="Eukaryota"/>
</dbReference>
<dbReference type="HOGENOM" id="CLU_014602_0_0_1"/>
<dbReference type="InParanoid" id="P78854"/>
<dbReference type="OMA" id="PYEFYSN"/>
<dbReference type="PhylomeDB" id="P78854"/>
<dbReference type="Reactome" id="R-SPO-111995">
    <property type="pathway name" value="phospho-PLA2 pathway"/>
</dbReference>
<dbReference type="Reactome" id="R-SPO-1482788">
    <property type="pathway name" value="Acyl chain remodelling of PC"/>
</dbReference>
<dbReference type="Reactome" id="R-SPO-1482798">
    <property type="pathway name" value="Acyl chain remodeling of CL"/>
</dbReference>
<dbReference type="Reactome" id="R-SPO-1482801">
    <property type="pathway name" value="Acyl chain remodelling of PS"/>
</dbReference>
<dbReference type="Reactome" id="R-SPO-1482839">
    <property type="pathway name" value="Acyl chain remodelling of PE"/>
</dbReference>
<dbReference type="Reactome" id="R-SPO-1482922">
    <property type="pathway name" value="Acyl chain remodelling of PI"/>
</dbReference>
<dbReference type="Reactome" id="R-SPO-1482925">
    <property type="pathway name" value="Acyl chain remodelling of PG"/>
</dbReference>
<dbReference type="Reactome" id="R-SPO-1483115">
    <property type="pathway name" value="Hydrolysis of LPC"/>
</dbReference>
<dbReference type="Reactome" id="R-SPO-1483152">
    <property type="pathway name" value="Hydrolysis of LPE"/>
</dbReference>
<dbReference type="Reactome" id="R-SPO-1483166">
    <property type="pathway name" value="Synthesis of PA"/>
</dbReference>
<dbReference type="Reactome" id="R-SPO-2142753">
    <property type="pathway name" value="Arachidonate metabolism"/>
</dbReference>
<dbReference type="Reactome" id="R-SPO-418592">
    <property type="pathway name" value="ADP signalling through P2Y purinoceptor 1"/>
</dbReference>
<dbReference type="Reactome" id="R-SPO-432142">
    <property type="pathway name" value="Platelet sensitization by LDL"/>
</dbReference>
<dbReference type="Reactome" id="R-SPO-6811436">
    <property type="pathway name" value="COPI-independent Golgi-to-ER retrograde traffic"/>
</dbReference>
<dbReference type="PRO" id="PR:P78854"/>
<dbReference type="Proteomes" id="UP000002485">
    <property type="component" value="Chromosome I"/>
</dbReference>
<dbReference type="GO" id="GO:0005829">
    <property type="term" value="C:cytosol"/>
    <property type="evidence" value="ECO:0007005"/>
    <property type="project" value="PomBase"/>
</dbReference>
<dbReference type="GO" id="GO:0005783">
    <property type="term" value="C:endoplasmic reticulum"/>
    <property type="evidence" value="ECO:0000314"/>
    <property type="project" value="PomBase"/>
</dbReference>
<dbReference type="GO" id="GO:0005576">
    <property type="term" value="C:extracellular region"/>
    <property type="evidence" value="ECO:0000305"/>
    <property type="project" value="PomBase"/>
</dbReference>
<dbReference type="GO" id="GO:0005634">
    <property type="term" value="C:nucleus"/>
    <property type="evidence" value="ECO:0007005"/>
    <property type="project" value="PomBase"/>
</dbReference>
<dbReference type="GO" id="GO:0004622">
    <property type="term" value="F:lysophospholipase activity"/>
    <property type="evidence" value="ECO:0000250"/>
    <property type="project" value="PomBase"/>
</dbReference>
<dbReference type="GO" id="GO:0004623">
    <property type="term" value="F:phospholipase A2 activity"/>
    <property type="evidence" value="ECO:0000318"/>
    <property type="project" value="GO_Central"/>
</dbReference>
<dbReference type="GO" id="GO:0071470">
    <property type="term" value="P:cellular response to osmotic stress"/>
    <property type="evidence" value="ECO:0000315"/>
    <property type="project" value="PomBase"/>
</dbReference>
<dbReference type="GO" id="GO:0046475">
    <property type="term" value="P:glycerophospholipid catabolic process"/>
    <property type="evidence" value="ECO:0000318"/>
    <property type="project" value="GO_Central"/>
</dbReference>
<dbReference type="GO" id="GO:0006970">
    <property type="term" value="P:response to osmotic stress"/>
    <property type="evidence" value="ECO:0000315"/>
    <property type="project" value="UniProtKB"/>
</dbReference>
<dbReference type="CDD" id="cd07203">
    <property type="entry name" value="cPLA2_Fungal_PLB"/>
    <property type="match status" value="1"/>
</dbReference>
<dbReference type="FunFam" id="3.40.1090.10:FF:000010">
    <property type="entry name" value="Lysophospholipase"/>
    <property type="match status" value="1"/>
</dbReference>
<dbReference type="Gene3D" id="3.40.1090.10">
    <property type="entry name" value="Cytosolic phospholipase A2 catalytic domain"/>
    <property type="match status" value="1"/>
</dbReference>
<dbReference type="InterPro" id="IPR016035">
    <property type="entry name" value="Acyl_Trfase/lysoPLipase"/>
</dbReference>
<dbReference type="InterPro" id="IPR002642">
    <property type="entry name" value="LysoPLipase_cat_dom"/>
</dbReference>
<dbReference type="PANTHER" id="PTHR10728">
    <property type="entry name" value="CYTOSOLIC PHOSPHOLIPASE A2"/>
    <property type="match status" value="1"/>
</dbReference>
<dbReference type="PANTHER" id="PTHR10728:SF61">
    <property type="entry name" value="LYSOPHOSPHOLIPASE 1"/>
    <property type="match status" value="1"/>
</dbReference>
<dbReference type="Pfam" id="PF01735">
    <property type="entry name" value="PLA2_B"/>
    <property type="match status" value="1"/>
</dbReference>
<dbReference type="SMART" id="SM00022">
    <property type="entry name" value="PLAc"/>
    <property type="match status" value="1"/>
</dbReference>
<dbReference type="SUPFAM" id="SSF52151">
    <property type="entry name" value="FabD/lysophospholipase-like"/>
    <property type="match status" value="1"/>
</dbReference>
<dbReference type="PROSITE" id="PS51210">
    <property type="entry name" value="PLA2C"/>
    <property type="match status" value="1"/>
</dbReference>